<dbReference type="EC" id="3.1.1.-" evidence="8"/>
<dbReference type="EC" id="3.1.1.3" evidence="8"/>
<dbReference type="EMBL" id="AB573710">
    <property type="protein sequence ID" value="BAJ13372.1"/>
    <property type="molecule type" value="Genomic_DNA"/>
</dbReference>
<dbReference type="SMR" id="D9N4H3"/>
<dbReference type="ESTHER" id="malfu-d9n4h3">
    <property type="family name" value="Fungal-Bact_LIP"/>
</dbReference>
<dbReference type="GO" id="GO:0005576">
    <property type="term" value="C:extracellular region"/>
    <property type="evidence" value="ECO:0007669"/>
    <property type="project" value="UniProtKB-SubCell"/>
</dbReference>
<dbReference type="GO" id="GO:0004806">
    <property type="term" value="F:triacylglycerol lipase activity"/>
    <property type="evidence" value="ECO:0007669"/>
    <property type="project" value="InterPro"/>
</dbReference>
<dbReference type="GO" id="GO:0016042">
    <property type="term" value="P:lipid catabolic process"/>
    <property type="evidence" value="ECO:0007669"/>
    <property type="project" value="UniProtKB-KW"/>
</dbReference>
<dbReference type="Gene3D" id="1.10.260.130">
    <property type="match status" value="1"/>
</dbReference>
<dbReference type="Gene3D" id="3.40.50.1820">
    <property type="entry name" value="alpha/beta hydrolase"/>
    <property type="match status" value="1"/>
</dbReference>
<dbReference type="InterPro" id="IPR029058">
    <property type="entry name" value="AB_hydrolase_fold"/>
</dbReference>
<dbReference type="InterPro" id="IPR005152">
    <property type="entry name" value="Lipase_secreted"/>
</dbReference>
<dbReference type="PANTHER" id="PTHR34853">
    <property type="match status" value="1"/>
</dbReference>
<dbReference type="PANTHER" id="PTHR34853:SF1">
    <property type="entry name" value="LIPASE 5"/>
    <property type="match status" value="1"/>
</dbReference>
<dbReference type="Pfam" id="PF03583">
    <property type="entry name" value="LIP"/>
    <property type="match status" value="1"/>
</dbReference>
<dbReference type="SUPFAM" id="SSF53474">
    <property type="entry name" value="alpha/beta-Hydrolases"/>
    <property type="match status" value="1"/>
</dbReference>
<protein>
    <recommendedName>
        <fullName evidence="5">Secreted triacylglycerol lipase LIP5</fullName>
        <ecNumber evidence="8">3.1.1.-</ecNumber>
        <ecNumber evidence="8">3.1.1.3</ecNumber>
    </recommendedName>
</protein>
<organism>
    <name type="scientific">Malassezia furfur</name>
    <name type="common">Pityriasis versicolor infection agent</name>
    <name type="synonym">Pityrosporum furfur</name>
    <dbReference type="NCBI Taxonomy" id="55194"/>
    <lineage>
        <taxon>Eukaryota</taxon>
        <taxon>Fungi</taxon>
        <taxon>Dikarya</taxon>
        <taxon>Basidiomycota</taxon>
        <taxon>Ustilaginomycotina</taxon>
        <taxon>Malasseziomycetes</taxon>
        <taxon>Malasseziales</taxon>
        <taxon>Malasseziaceae</taxon>
        <taxon>Malassezia</taxon>
    </lineage>
</organism>
<sequence length="382" mass="41868">TAGYEDEPSHTVTTVIVPHNAKSGQLVNYLAYIDSNGAQCAPSYSMRQGSKFLNDDLLNYQQLLFSTFLNEGWILTIPDYQGPQRAFAAGRLEGRMSLDGIRAALNFGEIGLEKNTSVVTYGYSGGAIASGWTAALQASYAPEINAIGFAMGGTPANVTSTVQSLDKGVFSGLCVAGITGIIYAYQVVQDWFQNHLYPKGNDAIEYARSHCITDIFSRYPFSHVFSDDFFRNGSSILYDPTIQSVISDIVLGLKESETPKAPVYMFHSQHDEIVPFSDARKTSHNWAKHGADVFFQEFSDLPIGHALSEITNIPNSLFFVRDRFAGKPFPKGYTRKVTGNGLEEPNASLAGLGELVRAIQDIQGREVGPADSELKQFILDRN</sequence>
<name>LIP5_MALFU</name>
<evidence type="ECO:0000250" key="1">
    <source>
        <dbReference type="UniProtKB" id="A8QCW4"/>
    </source>
</evidence>
<evidence type="ECO:0000250" key="2">
    <source>
        <dbReference type="UniProtKB" id="W3VKA4"/>
    </source>
</evidence>
<evidence type="ECO:0000255" key="3">
    <source>
        <dbReference type="PROSITE-ProRule" id="PRU00498"/>
    </source>
</evidence>
<evidence type="ECO:0000269" key="4">
    <source>
    </source>
</evidence>
<evidence type="ECO:0000303" key="5">
    <source>
    </source>
</evidence>
<evidence type="ECO:0000303" key="6">
    <source ref="1"/>
</evidence>
<evidence type="ECO:0000305" key="7"/>
<evidence type="ECO:0000305" key="8">
    <source>
    </source>
</evidence>
<evidence type="ECO:0000312" key="9">
    <source>
        <dbReference type="EMBL" id="BAJ13372.1"/>
    </source>
</evidence>
<keyword id="KW-1015">Disulfide bond</keyword>
<keyword id="KW-0325">Glycoprotein</keyword>
<keyword id="KW-0378">Hydrolase</keyword>
<keyword id="KW-0442">Lipid degradation</keyword>
<keyword id="KW-0443">Lipid metabolism</keyword>
<keyword id="KW-0964">Secreted</keyword>
<keyword id="KW-0843">Virulence</keyword>
<accession>D9N4H3</accession>
<comment type="function">
    <text evidence="4 8">Secreted lipase that hydrolyzes acylglycerol lipids such as triacylglycerols and consequently releases free fatty acid (PubMed:31860440). Can hydrolyze 4-nitrophenyl palmitate to release 4-nitrophenol and palmitoic acid (PubMed:31860440). Due to an absence of fatty acid synthase genes in Malassezia species, secretory lipases are essential for the yeast to generate free fatty acids from degradation of sebum and assimilate them as lipid sources for growth (PubMed:31860440). Plays important roles not only in lipid metabolism but also in the immune response of host cells and pathogenesis (Probable).</text>
</comment>
<comment type="catalytic activity">
    <reaction evidence="8">
        <text>a triacylglycerol + H2O = a diacylglycerol + a fatty acid + H(+)</text>
        <dbReference type="Rhea" id="RHEA:12044"/>
        <dbReference type="ChEBI" id="CHEBI:15377"/>
        <dbReference type="ChEBI" id="CHEBI:15378"/>
        <dbReference type="ChEBI" id="CHEBI:17855"/>
        <dbReference type="ChEBI" id="CHEBI:18035"/>
        <dbReference type="ChEBI" id="CHEBI:28868"/>
        <dbReference type="EC" id="3.1.1.3"/>
    </reaction>
</comment>
<comment type="catalytic activity">
    <reaction evidence="8">
        <text>a monoacylglycerol + H2O = glycerol + a fatty acid + H(+)</text>
        <dbReference type="Rhea" id="RHEA:15245"/>
        <dbReference type="ChEBI" id="CHEBI:15377"/>
        <dbReference type="ChEBI" id="CHEBI:15378"/>
        <dbReference type="ChEBI" id="CHEBI:17408"/>
        <dbReference type="ChEBI" id="CHEBI:17754"/>
        <dbReference type="ChEBI" id="CHEBI:28868"/>
    </reaction>
</comment>
<comment type="catalytic activity">
    <reaction evidence="8">
        <text>a diacylglycerol + H2O = a monoacylglycerol + a fatty acid + H(+)</text>
        <dbReference type="Rhea" id="RHEA:32731"/>
        <dbReference type="ChEBI" id="CHEBI:15377"/>
        <dbReference type="ChEBI" id="CHEBI:15378"/>
        <dbReference type="ChEBI" id="CHEBI:17408"/>
        <dbReference type="ChEBI" id="CHEBI:18035"/>
        <dbReference type="ChEBI" id="CHEBI:28868"/>
    </reaction>
</comment>
<comment type="subcellular location">
    <subcellularLocation>
        <location evidence="4">Secreted</location>
    </subcellularLocation>
    <text evidence="4">Secreted in response to the alkaline environment.</text>
</comment>
<comment type="induction">
    <text evidence="4">Constitutively expressed regardless of pH conditions or exposure time.</text>
</comment>
<comment type="similarity">
    <text evidence="7">Belongs to the AB hydrolase superfamily. Lipase family. Class Lip subfamily.</text>
</comment>
<proteinExistence type="evidence at transcript level"/>
<reference key="1">
    <citation type="submission" date="2010-07" db="EMBL/GenBank/DDBJ databases">
        <title>Malassezia furfur lipase gene family.</title>
        <authorList>
            <person name="Shibata N."/>
            <person name="Tsugawa H."/>
            <person name="Okawa Y."/>
        </authorList>
    </citation>
    <scope>NUCLEOTIDE SEQUENCE [GENOMIC DNA]</scope>
    <source>
        <strain>NBRC 0656</strain>
    </source>
</reference>
<reference key="2">
    <citation type="journal article" date="2020" name="Microbiology">
        <title>Ambient pH regulates secretion of lipases in Malassezia furfur.</title>
        <authorList>
            <person name="Juntachai W."/>
            <person name="Chaichompoo A."/>
            <person name="Chanarat S."/>
        </authorList>
    </citation>
    <scope>FUNCTION</scope>
    <scope>SUBCELLULAR LOCATION</scope>
    <scope>INDUCTION</scope>
</reference>
<feature type="chain" id="PRO_0000459494" description="Secreted triacylglycerol lipase LIP5">
    <location>
        <begin position="1" status="less than"/>
        <end position="382"/>
    </location>
</feature>
<feature type="active site" description="Nucleophile" evidence="1">
    <location>
        <position position="124"/>
    </location>
</feature>
<feature type="active site" evidence="1">
    <location>
        <position position="271"/>
    </location>
</feature>
<feature type="active site" evidence="1">
    <location>
        <position position="305"/>
    </location>
</feature>
<feature type="glycosylation site" description="N-linked (GlcNAc...) asparagine" evidence="3">
    <location>
        <position position="115"/>
    </location>
</feature>
<feature type="glycosylation site" description="N-linked (GlcNAc...) asparagine" evidence="3">
    <location>
        <position position="157"/>
    </location>
</feature>
<feature type="glycosylation site" description="N-linked (GlcNAc...) asparagine" evidence="3">
    <location>
        <position position="232"/>
    </location>
</feature>
<feature type="glycosylation site" description="N-linked (GlcNAc...) asparagine" evidence="3">
    <location>
        <position position="346"/>
    </location>
</feature>
<feature type="disulfide bond" evidence="2">
    <location>
        <begin position="40"/>
        <end position="211"/>
    </location>
</feature>
<feature type="non-terminal residue" evidence="9">
    <location>
        <position position="1"/>
    </location>
</feature>
<gene>
    <name evidence="6" type="primary">LIP5</name>
</gene>